<proteinExistence type="inferred from homology"/>
<organism>
    <name type="scientific">Morganella morganii</name>
    <name type="common">Proteus morganii</name>
    <dbReference type="NCBI Taxonomy" id="582"/>
    <lineage>
        <taxon>Bacteria</taxon>
        <taxon>Pseudomonadati</taxon>
        <taxon>Pseudomonadota</taxon>
        <taxon>Gammaproteobacteria</taxon>
        <taxon>Enterobacterales</taxon>
        <taxon>Morganellaceae</taxon>
        <taxon>Morganella</taxon>
    </lineage>
</organism>
<accession>Q9ZHR1</accession>
<evidence type="ECO:0000255" key="1">
    <source>
        <dbReference type="HAMAP-Rule" id="MF_02099"/>
    </source>
</evidence>
<name>HYBF_MORMO</name>
<keyword id="KW-0479">Metal-binding</keyword>
<keyword id="KW-0533">Nickel</keyword>
<keyword id="KW-0862">Zinc</keyword>
<gene>
    <name evidence="1" type="primary">hybF</name>
</gene>
<dbReference type="EMBL" id="AF055067">
    <property type="protein sequence ID" value="AAC68580.1"/>
    <property type="molecule type" value="Genomic_DNA"/>
</dbReference>
<dbReference type="SMR" id="Q9ZHR1"/>
<dbReference type="STRING" id="582.AL531_12220"/>
<dbReference type="OrthoDB" id="288014at2"/>
<dbReference type="GO" id="GO:0016151">
    <property type="term" value="F:nickel cation binding"/>
    <property type="evidence" value="ECO:0007669"/>
    <property type="project" value="UniProtKB-UniRule"/>
</dbReference>
<dbReference type="GO" id="GO:0008270">
    <property type="term" value="F:zinc ion binding"/>
    <property type="evidence" value="ECO:0007669"/>
    <property type="project" value="UniProtKB-UniRule"/>
</dbReference>
<dbReference type="GO" id="GO:0051604">
    <property type="term" value="P:protein maturation"/>
    <property type="evidence" value="ECO:0007669"/>
    <property type="project" value="InterPro"/>
</dbReference>
<dbReference type="GO" id="GO:0036211">
    <property type="term" value="P:protein modification process"/>
    <property type="evidence" value="ECO:0007669"/>
    <property type="project" value="UniProtKB-UniRule"/>
</dbReference>
<dbReference type="FunFam" id="3.30.2320.80:FF:000001">
    <property type="entry name" value="Hydrogenase maturation factor HypA"/>
    <property type="match status" value="1"/>
</dbReference>
<dbReference type="Gene3D" id="3.30.2320.80">
    <property type="match status" value="1"/>
</dbReference>
<dbReference type="HAMAP" id="MF_02099">
    <property type="entry name" value="HybF_subfam"/>
    <property type="match status" value="1"/>
</dbReference>
<dbReference type="HAMAP" id="MF_00213">
    <property type="entry name" value="HypA_HybF"/>
    <property type="match status" value="1"/>
</dbReference>
<dbReference type="InterPro" id="IPR039002">
    <property type="entry name" value="HybF"/>
</dbReference>
<dbReference type="InterPro" id="IPR020538">
    <property type="entry name" value="Hydgase_Ni_incorp_HypA/HybF_CS"/>
</dbReference>
<dbReference type="InterPro" id="IPR000688">
    <property type="entry name" value="HypA/HybF"/>
</dbReference>
<dbReference type="NCBIfam" id="TIGR00100">
    <property type="entry name" value="hypA"/>
    <property type="match status" value="1"/>
</dbReference>
<dbReference type="NCBIfam" id="NF009046">
    <property type="entry name" value="PRK12380.1"/>
    <property type="match status" value="1"/>
</dbReference>
<dbReference type="PANTHER" id="PTHR34535:SF4">
    <property type="entry name" value="HYDROGENASE MATURATION FACTOR HYBF"/>
    <property type="match status" value="1"/>
</dbReference>
<dbReference type="PANTHER" id="PTHR34535">
    <property type="entry name" value="HYDROGENASE MATURATION FACTOR HYPA"/>
    <property type="match status" value="1"/>
</dbReference>
<dbReference type="Pfam" id="PF01155">
    <property type="entry name" value="HypA"/>
    <property type="match status" value="1"/>
</dbReference>
<dbReference type="PIRSF" id="PIRSF004761">
    <property type="entry name" value="Hydrgn_mat_HypA"/>
    <property type="match status" value="1"/>
</dbReference>
<dbReference type="PROSITE" id="PS01249">
    <property type="entry name" value="HYPA"/>
    <property type="match status" value="1"/>
</dbReference>
<sequence length="113" mass="12511">MHELSLCMSAADIIREQAEQHGIARVTDVWLEVGALADVEESALHFCFDIACRDTVAQGCTLHIDVIPAQAWCWDCSREAEIMQHAGCCPHCGSERLRISEGDDLRVKSLEGE</sequence>
<reference key="1">
    <citation type="journal article" date="1999" name="Antimicrob. Agents Chemother.">
        <title>Cloning, sequence analyses, expression, and distribution of ampC-ampR from Morganella morganii clinical isolates.</title>
        <authorList>
            <person name="Poirel L."/>
            <person name="Guibert M."/>
            <person name="Girlich D."/>
            <person name="Naas T."/>
            <person name="Nordmann P."/>
        </authorList>
    </citation>
    <scope>NUCLEOTIDE SEQUENCE [GENOMIC DNA]</scope>
    <source>
        <strain>GUI-1</strain>
    </source>
</reference>
<comment type="function">
    <text evidence="1">Involved in the maturation of [NiFe] hydrogenases. Required for nickel insertion into the metal center of the hydrogenase.</text>
</comment>
<comment type="similarity">
    <text evidence="1">Belongs to the HypA/HybF family. HybF subfamily.</text>
</comment>
<protein>
    <recommendedName>
        <fullName evidence="1">Hydrogenase maturation factor HybF</fullName>
    </recommendedName>
</protein>
<feature type="chain" id="PRO_0000129067" description="Hydrogenase maturation factor HybF">
    <location>
        <begin position="1"/>
        <end position="113"/>
    </location>
</feature>
<feature type="binding site" evidence="1">
    <location>
        <position position="2"/>
    </location>
    <ligand>
        <name>Ni(2+)</name>
        <dbReference type="ChEBI" id="CHEBI:49786"/>
    </ligand>
</feature>
<feature type="binding site" evidence="1">
    <location>
        <position position="3"/>
    </location>
    <ligand>
        <name>Ni(2+)</name>
        <dbReference type="ChEBI" id="CHEBI:49786"/>
    </ligand>
</feature>
<feature type="binding site" evidence="1">
    <location>
        <position position="73"/>
    </location>
    <ligand>
        <name>Zn(2+)</name>
        <dbReference type="ChEBI" id="CHEBI:29105"/>
    </ligand>
</feature>
<feature type="binding site" evidence="1">
    <location>
        <position position="76"/>
    </location>
    <ligand>
        <name>Zn(2+)</name>
        <dbReference type="ChEBI" id="CHEBI:29105"/>
    </ligand>
</feature>
<feature type="binding site" evidence="1">
    <location>
        <position position="89"/>
    </location>
    <ligand>
        <name>Zn(2+)</name>
        <dbReference type="ChEBI" id="CHEBI:29105"/>
    </ligand>
</feature>
<feature type="binding site" evidence="1">
    <location>
        <position position="92"/>
    </location>
    <ligand>
        <name>Zn(2+)</name>
        <dbReference type="ChEBI" id="CHEBI:29105"/>
    </ligand>
</feature>